<reference key="1">
    <citation type="journal article" date="2002" name="Proc. Natl. Acad. Sci. U.S.A.">
        <title>Complete genome sequence and comparative genomic analysis of an emerging human pathogen, serotype V Streptococcus agalactiae.</title>
        <authorList>
            <person name="Tettelin H."/>
            <person name="Masignani V."/>
            <person name="Cieslewicz M.J."/>
            <person name="Eisen J.A."/>
            <person name="Peterson S.N."/>
            <person name="Wessels M.R."/>
            <person name="Paulsen I.T."/>
            <person name="Nelson K.E."/>
            <person name="Margarit I."/>
            <person name="Read T.D."/>
            <person name="Madoff L.C."/>
            <person name="Wolf A.M."/>
            <person name="Beanan M.J."/>
            <person name="Brinkac L.M."/>
            <person name="Daugherty S.C."/>
            <person name="DeBoy R.T."/>
            <person name="Durkin A.S."/>
            <person name="Kolonay J.F."/>
            <person name="Madupu R."/>
            <person name="Lewis M.R."/>
            <person name="Radune D."/>
            <person name="Fedorova N.B."/>
            <person name="Scanlan D."/>
            <person name="Khouri H.M."/>
            <person name="Mulligan S."/>
            <person name="Carty H.A."/>
            <person name="Cline R.T."/>
            <person name="Van Aken S.E."/>
            <person name="Gill J."/>
            <person name="Scarselli M."/>
            <person name="Mora M."/>
            <person name="Iacobini E.T."/>
            <person name="Brettoni C."/>
            <person name="Galli G."/>
            <person name="Mariani M."/>
            <person name="Vegni F."/>
            <person name="Maione D."/>
            <person name="Rinaudo D."/>
            <person name="Rappuoli R."/>
            <person name="Telford J.L."/>
            <person name="Kasper D.L."/>
            <person name="Grandi G."/>
            <person name="Fraser C.M."/>
        </authorList>
    </citation>
    <scope>NUCLEOTIDE SEQUENCE [LARGE SCALE GENOMIC DNA]</scope>
    <source>
        <strain>ATCC BAA-611 / 2603 V/R</strain>
    </source>
</reference>
<gene>
    <name evidence="1" type="primary">tilS</name>
    <name type="ordered locus">SAG0014</name>
</gene>
<keyword id="KW-0067">ATP-binding</keyword>
<keyword id="KW-0963">Cytoplasm</keyword>
<keyword id="KW-0436">Ligase</keyword>
<keyword id="KW-0547">Nucleotide-binding</keyword>
<keyword id="KW-1185">Reference proteome</keyword>
<keyword id="KW-0819">tRNA processing</keyword>
<name>TILS_STRA5</name>
<dbReference type="EC" id="6.3.4.19" evidence="1"/>
<dbReference type="EMBL" id="AE009948">
    <property type="protein sequence ID" value="AAM98922.1"/>
    <property type="molecule type" value="Genomic_DNA"/>
</dbReference>
<dbReference type="RefSeq" id="NP_687050.1">
    <property type="nucleotide sequence ID" value="NC_004116.1"/>
</dbReference>
<dbReference type="RefSeq" id="WP_000282856.1">
    <property type="nucleotide sequence ID" value="NC_004116.1"/>
</dbReference>
<dbReference type="SMR" id="Q8E2H4"/>
<dbReference type="STRING" id="208435.SAG0014"/>
<dbReference type="KEGG" id="sag:SAG0014"/>
<dbReference type="PATRIC" id="fig|208435.3.peg.13"/>
<dbReference type="HOGENOM" id="CLU_018869_0_2_9"/>
<dbReference type="OrthoDB" id="9807403at2"/>
<dbReference type="Proteomes" id="UP000000821">
    <property type="component" value="Chromosome"/>
</dbReference>
<dbReference type="GO" id="GO:0005737">
    <property type="term" value="C:cytoplasm"/>
    <property type="evidence" value="ECO:0007669"/>
    <property type="project" value="UniProtKB-SubCell"/>
</dbReference>
<dbReference type="GO" id="GO:0005524">
    <property type="term" value="F:ATP binding"/>
    <property type="evidence" value="ECO:0007669"/>
    <property type="project" value="UniProtKB-UniRule"/>
</dbReference>
<dbReference type="GO" id="GO:0032267">
    <property type="term" value="F:tRNA(Ile)-lysidine synthase activity"/>
    <property type="evidence" value="ECO:0007669"/>
    <property type="project" value="UniProtKB-EC"/>
</dbReference>
<dbReference type="GO" id="GO:0006400">
    <property type="term" value="P:tRNA modification"/>
    <property type="evidence" value="ECO:0007669"/>
    <property type="project" value="UniProtKB-UniRule"/>
</dbReference>
<dbReference type="CDD" id="cd01992">
    <property type="entry name" value="TilS_N"/>
    <property type="match status" value="1"/>
</dbReference>
<dbReference type="Gene3D" id="3.40.50.620">
    <property type="entry name" value="HUPs"/>
    <property type="match status" value="1"/>
</dbReference>
<dbReference type="HAMAP" id="MF_01161">
    <property type="entry name" value="tRNA_Ile_lys_synt"/>
    <property type="match status" value="1"/>
</dbReference>
<dbReference type="InterPro" id="IPR012796">
    <property type="entry name" value="Lysidine-tRNA-synth_C"/>
</dbReference>
<dbReference type="InterPro" id="IPR014729">
    <property type="entry name" value="Rossmann-like_a/b/a_fold"/>
</dbReference>
<dbReference type="InterPro" id="IPR011063">
    <property type="entry name" value="TilS/TtcA_N"/>
</dbReference>
<dbReference type="InterPro" id="IPR012094">
    <property type="entry name" value="tRNA_Ile_lys_synt"/>
</dbReference>
<dbReference type="InterPro" id="IPR012795">
    <property type="entry name" value="tRNA_Ile_lys_synt_N"/>
</dbReference>
<dbReference type="NCBIfam" id="TIGR02433">
    <property type="entry name" value="lysidine_TilS_C"/>
    <property type="match status" value="1"/>
</dbReference>
<dbReference type="NCBIfam" id="TIGR02432">
    <property type="entry name" value="lysidine_TilS_N"/>
    <property type="match status" value="1"/>
</dbReference>
<dbReference type="PANTHER" id="PTHR43033">
    <property type="entry name" value="TRNA(ILE)-LYSIDINE SYNTHASE-RELATED"/>
    <property type="match status" value="1"/>
</dbReference>
<dbReference type="PANTHER" id="PTHR43033:SF1">
    <property type="entry name" value="TRNA(ILE)-LYSIDINE SYNTHASE-RELATED"/>
    <property type="match status" value="1"/>
</dbReference>
<dbReference type="Pfam" id="PF01171">
    <property type="entry name" value="ATP_bind_3"/>
    <property type="match status" value="1"/>
</dbReference>
<dbReference type="SMART" id="SM00977">
    <property type="entry name" value="TilS_C"/>
    <property type="match status" value="1"/>
</dbReference>
<dbReference type="SUPFAM" id="SSF52402">
    <property type="entry name" value="Adenine nucleotide alpha hydrolases-like"/>
    <property type="match status" value="1"/>
</dbReference>
<dbReference type="SUPFAM" id="SSF56037">
    <property type="entry name" value="PheT/TilS domain"/>
    <property type="match status" value="1"/>
</dbReference>
<evidence type="ECO:0000255" key="1">
    <source>
        <dbReference type="HAMAP-Rule" id="MF_01161"/>
    </source>
</evidence>
<comment type="function">
    <text evidence="1">Ligates lysine onto the cytidine present at position 34 of the AUA codon-specific tRNA(Ile) that contains the anticodon CAU, in an ATP-dependent manner. Cytidine is converted to lysidine, thus changing the amino acid specificity of the tRNA from methionine to isoleucine.</text>
</comment>
<comment type="catalytic activity">
    <reaction evidence="1">
        <text>cytidine(34) in tRNA(Ile2) + L-lysine + ATP = lysidine(34) in tRNA(Ile2) + AMP + diphosphate + H(+)</text>
        <dbReference type="Rhea" id="RHEA:43744"/>
        <dbReference type="Rhea" id="RHEA-COMP:10625"/>
        <dbReference type="Rhea" id="RHEA-COMP:10670"/>
        <dbReference type="ChEBI" id="CHEBI:15378"/>
        <dbReference type="ChEBI" id="CHEBI:30616"/>
        <dbReference type="ChEBI" id="CHEBI:32551"/>
        <dbReference type="ChEBI" id="CHEBI:33019"/>
        <dbReference type="ChEBI" id="CHEBI:82748"/>
        <dbReference type="ChEBI" id="CHEBI:83665"/>
        <dbReference type="ChEBI" id="CHEBI:456215"/>
        <dbReference type="EC" id="6.3.4.19"/>
    </reaction>
</comment>
<comment type="subcellular location">
    <subcellularLocation>
        <location evidence="1">Cytoplasm</location>
    </subcellularLocation>
</comment>
<comment type="domain">
    <text>The N-terminal region contains the highly conserved SGGXDS motif, predicted to be a P-loop motif involved in ATP binding.</text>
</comment>
<comment type="similarity">
    <text evidence="1">Belongs to the tRNA(Ile)-lysidine synthase family.</text>
</comment>
<organism>
    <name type="scientific">Streptococcus agalactiae serotype V (strain ATCC BAA-611 / 2603 V/R)</name>
    <dbReference type="NCBI Taxonomy" id="208435"/>
    <lineage>
        <taxon>Bacteria</taxon>
        <taxon>Bacillati</taxon>
        <taxon>Bacillota</taxon>
        <taxon>Bacilli</taxon>
        <taxon>Lactobacillales</taxon>
        <taxon>Streptococcaceae</taxon>
        <taxon>Streptococcus</taxon>
    </lineage>
</organism>
<sequence>MYNTILKDTLSKGLFTAHQKVLIAVSGGIDSINLLQFLYQYQKELSISIGIAHINHGQRKESEKEEEYIRQWGQIHDVPVFISYFQGIFSEDRARNHRYNFFSKVMREEGYTALVTAHHADDQAETVFMRILRGSRLRYLSGIKQVSAFANGQLIRPFLPYKKELLPNIFHFEDASNASSDYLRNRIRNVYFPALERENNQLKDSLITLSEETECLFTALTDLTRSIEVTNCYDFLRQTHSVQEFLLQDYISKFPDLQVSKEQFRVILKLIRTKANIDYTIKSGYFLHKDYESFHITKIHPKTDSFKVEKRLELHNIQIFSQYLFSYGKFISQADITIPIYDTSPIILRRRKEGDRIFLGNHTKKIRRLFIDEKITLKEREEAVIGEQNKELIFVIVAGRTYLRKPSEHDIMKGKLYIENLEKR</sequence>
<proteinExistence type="inferred from homology"/>
<feature type="chain" id="PRO_0000181774" description="tRNA(Ile)-lysidine synthase">
    <location>
        <begin position="1"/>
        <end position="424"/>
    </location>
</feature>
<feature type="binding site" evidence="1">
    <location>
        <begin position="26"/>
        <end position="31"/>
    </location>
    <ligand>
        <name>ATP</name>
        <dbReference type="ChEBI" id="CHEBI:30616"/>
    </ligand>
</feature>
<accession>Q8E2H4</accession>
<protein>
    <recommendedName>
        <fullName evidence="1">tRNA(Ile)-lysidine synthase</fullName>
        <ecNumber evidence="1">6.3.4.19</ecNumber>
    </recommendedName>
    <alternativeName>
        <fullName evidence="1">tRNA(Ile)-2-lysyl-cytidine synthase</fullName>
    </alternativeName>
    <alternativeName>
        <fullName evidence="1">tRNA(Ile)-lysidine synthetase</fullName>
    </alternativeName>
</protein>